<dbReference type="EC" id="3.1.26.4" evidence="1"/>
<dbReference type="EMBL" id="AE009442">
    <property type="protein sequence ID" value="AAO29068.1"/>
    <property type="molecule type" value="Genomic_DNA"/>
</dbReference>
<dbReference type="RefSeq" id="WP_004088617.1">
    <property type="nucleotide sequence ID" value="NC_004556.1"/>
</dbReference>
<dbReference type="SMR" id="Q87C76"/>
<dbReference type="GeneID" id="93905018"/>
<dbReference type="KEGG" id="xft:PD_1218"/>
<dbReference type="HOGENOM" id="CLU_030894_6_0_6"/>
<dbReference type="Proteomes" id="UP000002516">
    <property type="component" value="Chromosome"/>
</dbReference>
<dbReference type="GO" id="GO:0005737">
    <property type="term" value="C:cytoplasm"/>
    <property type="evidence" value="ECO:0007669"/>
    <property type="project" value="UniProtKB-SubCell"/>
</dbReference>
<dbReference type="GO" id="GO:0000287">
    <property type="term" value="F:magnesium ion binding"/>
    <property type="evidence" value="ECO:0007669"/>
    <property type="project" value="UniProtKB-UniRule"/>
</dbReference>
<dbReference type="GO" id="GO:0003676">
    <property type="term" value="F:nucleic acid binding"/>
    <property type="evidence" value="ECO:0007669"/>
    <property type="project" value="InterPro"/>
</dbReference>
<dbReference type="GO" id="GO:0004523">
    <property type="term" value="F:RNA-DNA hybrid ribonuclease activity"/>
    <property type="evidence" value="ECO:0007669"/>
    <property type="project" value="UniProtKB-UniRule"/>
</dbReference>
<dbReference type="GO" id="GO:0043137">
    <property type="term" value="P:DNA replication, removal of RNA primer"/>
    <property type="evidence" value="ECO:0007669"/>
    <property type="project" value="TreeGrafter"/>
</dbReference>
<dbReference type="CDD" id="cd09278">
    <property type="entry name" value="RNase_HI_prokaryote_like"/>
    <property type="match status" value="1"/>
</dbReference>
<dbReference type="FunFam" id="3.30.420.10:FF:000089">
    <property type="entry name" value="Ribonuclease H"/>
    <property type="match status" value="1"/>
</dbReference>
<dbReference type="Gene3D" id="3.30.420.10">
    <property type="entry name" value="Ribonuclease H-like superfamily/Ribonuclease H"/>
    <property type="match status" value="1"/>
</dbReference>
<dbReference type="HAMAP" id="MF_00042">
    <property type="entry name" value="RNase_H"/>
    <property type="match status" value="1"/>
</dbReference>
<dbReference type="InterPro" id="IPR050092">
    <property type="entry name" value="RNase_H"/>
</dbReference>
<dbReference type="InterPro" id="IPR012337">
    <property type="entry name" value="RNaseH-like_sf"/>
</dbReference>
<dbReference type="InterPro" id="IPR002156">
    <property type="entry name" value="RNaseH_domain"/>
</dbReference>
<dbReference type="InterPro" id="IPR036397">
    <property type="entry name" value="RNaseH_sf"/>
</dbReference>
<dbReference type="InterPro" id="IPR022892">
    <property type="entry name" value="RNaseHI"/>
</dbReference>
<dbReference type="NCBIfam" id="NF001236">
    <property type="entry name" value="PRK00203.1"/>
    <property type="match status" value="1"/>
</dbReference>
<dbReference type="PANTHER" id="PTHR10642">
    <property type="entry name" value="RIBONUCLEASE H1"/>
    <property type="match status" value="1"/>
</dbReference>
<dbReference type="PANTHER" id="PTHR10642:SF26">
    <property type="entry name" value="RIBONUCLEASE H1"/>
    <property type="match status" value="1"/>
</dbReference>
<dbReference type="Pfam" id="PF00075">
    <property type="entry name" value="RNase_H"/>
    <property type="match status" value="1"/>
</dbReference>
<dbReference type="SUPFAM" id="SSF53098">
    <property type="entry name" value="Ribonuclease H-like"/>
    <property type="match status" value="1"/>
</dbReference>
<dbReference type="PROSITE" id="PS50879">
    <property type="entry name" value="RNASE_H_1"/>
    <property type="match status" value="1"/>
</dbReference>
<organism>
    <name type="scientific">Xylella fastidiosa (strain Temecula1 / ATCC 700964)</name>
    <dbReference type="NCBI Taxonomy" id="183190"/>
    <lineage>
        <taxon>Bacteria</taxon>
        <taxon>Pseudomonadati</taxon>
        <taxon>Pseudomonadota</taxon>
        <taxon>Gammaproteobacteria</taxon>
        <taxon>Lysobacterales</taxon>
        <taxon>Lysobacteraceae</taxon>
        <taxon>Xylella</taxon>
    </lineage>
</organism>
<gene>
    <name evidence="1" type="primary">rnhA</name>
    <name type="ordered locus">PD_1218</name>
</gene>
<evidence type="ECO:0000255" key="1">
    <source>
        <dbReference type="HAMAP-Rule" id="MF_00042"/>
    </source>
</evidence>
<evidence type="ECO:0000255" key="2">
    <source>
        <dbReference type="PROSITE-ProRule" id="PRU00408"/>
    </source>
</evidence>
<keyword id="KW-0963">Cytoplasm</keyword>
<keyword id="KW-0255">Endonuclease</keyword>
<keyword id="KW-0378">Hydrolase</keyword>
<keyword id="KW-0460">Magnesium</keyword>
<keyword id="KW-0479">Metal-binding</keyword>
<keyword id="KW-0540">Nuclease</keyword>
<keyword id="KW-1185">Reference proteome</keyword>
<protein>
    <recommendedName>
        <fullName evidence="1">Ribonuclease HI</fullName>
        <shortName evidence="1">RNase HI</shortName>
        <ecNumber evidence="1">3.1.26.4</ecNumber>
    </recommendedName>
</protein>
<reference key="1">
    <citation type="journal article" date="2003" name="J. Bacteriol.">
        <title>Comparative analyses of the complete genome sequences of Pierce's disease and citrus variegated chlorosis strains of Xylella fastidiosa.</title>
        <authorList>
            <person name="Van Sluys M.A."/>
            <person name="de Oliveira M.C."/>
            <person name="Monteiro-Vitorello C.B."/>
            <person name="Miyaki C.Y."/>
            <person name="Furlan L.R."/>
            <person name="Camargo L.E.A."/>
            <person name="da Silva A.C.R."/>
            <person name="Moon D.H."/>
            <person name="Takita M.A."/>
            <person name="Lemos E.G.M."/>
            <person name="Machado M.A."/>
            <person name="Ferro M.I.T."/>
            <person name="da Silva F.R."/>
            <person name="Goldman M.H.S."/>
            <person name="Goldman G.H."/>
            <person name="Lemos M.V.F."/>
            <person name="El-Dorry H."/>
            <person name="Tsai S.M."/>
            <person name="Carrer H."/>
            <person name="Carraro D.M."/>
            <person name="de Oliveira R.C."/>
            <person name="Nunes L.R."/>
            <person name="Siqueira W.J."/>
            <person name="Coutinho L.L."/>
            <person name="Kimura E.T."/>
            <person name="Ferro E.S."/>
            <person name="Harakava R."/>
            <person name="Kuramae E.E."/>
            <person name="Marino C.L."/>
            <person name="Giglioti E."/>
            <person name="Abreu I.L."/>
            <person name="Alves L.M.C."/>
            <person name="do Amaral A.M."/>
            <person name="Baia G.S."/>
            <person name="Blanco S.R."/>
            <person name="Brito M.S."/>
            <person name="Cannavan F.S."/>
            <person name="Celestino A.V."/>
            <person name="da Cunha A.F."/>
            <person name="Fenille R.C."/>
            <person name="Ferro J.A."/>
            <person name="Formighieri E.F."/>
            <person name="Kishi L.T."/>
            <person name="Leoni S.G."/>
            <person name="Oliveira A.R."/>
            <person name="Rosa V.E. Jr."/>
            <person name="Sassaki F.T."/>
            <person name="Sena J.A.D."/>
            <person name="de Souza A.A."/>
            <person name="Truffi D."/>
            <person name="Tsukumo F."/>
            <person name="Yanai G.M."/>
            <person name="Zaros L.G."/>
            <person name="Civerolo E.L."/>
            <person name="Simpson A.J.G."/>
            <person name="Almeida N.F. Jr."/>
            <person name="Setubal J.C."/>
            <person name="Kitajima J.P."/>
        </authorList>
    </citation>
    <scope>NUCLEOTIDE SEQUENCE [LARGE SCALE GENOMIC DNA]</scope>
    <source>
        <strain>Temecula1 / ATCC 700964</strain>
    </source>
</reference>
<proteinExistence type="inferred from homology"/>
<accession>Q87C76</accession>
<feature type="chain" id="PRO_0000195426" description="Ribonuclease HI">
    <location>
        <begin position="1"/>
        <end position="150"/>
    </location>
</feature>
<feature type="domain" description="RNase H type-1" evidence="2">
    <location>
        <begin position="1"/>
        <end position="141"/>
    </location>
</feature>
<feature type="binding site" evidence="1">
    <location>
        <position position="9"/>
    </location>
    <ligand>
        <name>Mg(2+)</name>
        <dbReference type="ChEBI" id="CHEBI:18420"/>
        <label>1</label>
    </ligand>
</feature>
<feature type="binding site" evidence="1">
    <location>
        <position position="9"/>
    </location>
    <ligand>
        <name>Mg(2+)</name>
        <dbReference type="ChEBI" id="CHEBI:18420"/>
        <label>2</label>
    </ligand>
</feature>
<feature type="binding site" evidence="1">
    <location>
        <position position="47"/>
    </location>
    <ligand>
        <name>Mg(2+)</name>
        <dbReference type="ChEBI" id="CHEBI:18420"/>
        <label>1</label>
    </ligand>
</feature>
<feature type="binding site" evidence="1">
    <location>
        <position position="69"/>
    </location>
    <ligand>
        <name>Mg(2+)</name>
        <dbReference type="ChEBI" id="CHEBI:18420"/>
        <label>1</label>
    </ligand>
</feature>
<feature type="binding site" evidence="1">
    <location>
        <position position="133"/>
    </location>
    <ligand>
        <name>Mg(2+)</name>
        <dbReference type="ChEBI" id="CHEBI:18420"/>
        <label>2</label>
    </ligand>
</feature>
<name>RNH_XYLFT</name>
<sequence>MKLINAYTDGSCLGNPGPGGWAVLLRYKNNEKELVGGELDTTNNRMELMAAIMALERLSEPCQIKLHTDSQYVRQGITEWMSGWVRRGWKTAAGDPVKNRDLWERLCAATQRHMIEWCWVKAHNGDSDNERVDVLARGQAMAQRSTVASR</sequence>
<comment type="function">
    <text evidence="1">Endonuclease that specifically degrades the RNA of RNA-DNA hybrids.</text>
</comment>
<comment type="catalytic activity">
    <reaction evidence="1">
        <text>Endonucleolytic cleavage to 5'-phosphomonoester.</text>
        <dbReference type="EC" id="3.1.26.4"/>
    </reaction>
</comment>
<comment type="cofactor">
    <cofactor evidence="1">
        <name>Mg(2+)</name>
        <dbReference type="ChEBI" id="CHEBI:18420"/>
    </cofactor>
    <text evidence="1">Binds 1 Mg(2+) ion per subunit. May bind a second metal ion at a regulatory site, or after substrate binding.</text>
</comment>
<comment type="subunit">
    <text evidence="1">Monomer.</text>
</comment>
<comment type="subcellular location">
    <subcellularLocation>
        <location evidence="1">Cytoplasm</location>
    </subcellularLocation>
</comment>
<comment type="similarity">
    <text evidence="1">Belongs to the RNase H family.</text>
</comment>